<dbReference type="EMBL" id="CP000792">
    <property type="protein sequence ID" value="EAT98866.1"/>
    <property type="molecule type" value="Genomic_DNA"/>
</dbReference>
<dbReference type="RefSeq" id="WP_012001233.1">
    <property type="nucleotide sequence ID" value="NC_009802.2"/>
</dbReference>
<dbReference type="SMR" id="A7ZBS1"/>
<dbReference type="STRING" id="360104.CCC13826_0777"/>
<dbReference type="KEGG" id="cco:CCC13826_0777"/>
<dbReference type="eggNOG" id="COG1160">
    <property type="taxonomic scope" value="Bacteria"/>
</dbReference>
<dbReference type="HOGENOM" id="CLU_016077_6_2_7"/>
<dbReference type="OrthoDB" id="9805918at2"/>
<dbReference type="Proteomes" id="UP000001121">
    <property type="component" value="Chromosome"/>
</dbReference>
<dbReference type="GO" id="GO:0005525">
    <property type="term" value="F:GTP binding"/>
    <property type="evidence" value="ECO:0007669"/>
    <property type="project" value="UniProtKB-UniRule"/>
</dbReference>
<dbReference type="GO" id="GO:0043022">
    <property type="term" value="F:ribosome binding"/>
    <property type="evidence" value="ECO:0007669"/>
    <property type="project" value="TreeGrafter"/>
</dbReference>
<dbReference type="GO" id="GO:0042254">
    <property type="term" value="P:ribosome biogenesis"/>
    <property type="evidence" value="ECO:0007669"/>
    <property type="project" value="UniProtKB-KW"/>
</dbReference>
<dbReference type="CDD" id="cd01894">
    <property type="entry name" value="EngA1"/>
    <property type="match status" value="1"/>
</dbReference>
<dbReference type="CDD" id="cd01895">
    <property type="entry name" value="EngA2"/>
    <property type="match status" value="1"/>
</dbReference>
<dbReference type="FunFam" id="3.30.300.20:FF:000004">
    <property type="entry name" value="GTPase Der"/>
    <property type="match status" value="1"/>
</dbReference>
<dbReference type="FunFam" id="3.40.50.300:FF:000494">
    <property type="entry name" value="tRNA modification GTPase MnmE"/>
    <property type="match status" value="1"/>
</dbReference>
<dbReference type="Gene3D" id="3.30.300.20">
    <property type="match status" value="1"/>
</dbReference>
<dbReference type="Gene3D" id="3.40.50.300">
    <property type="entry name" value="P-loop containing nucleotide triphosphate hydrolases"/>
    <property type="match status" value="2"/>
</dbReference>
<dbReference type="HAMAP" id="MF_00195">
    <property type="entry name" value="GTPase_Der"/>
    <property type="match status" value="1"/>
</dbReference>
<dbReference type="InterPro" id="IPR031166">
    <property type="entry name" value="G_ENGA"/>
</dbReference>
<dbReference type="InterPro" id="IPR006073">
    <property type="entry name" value="GTP-bd"/>
</dbReference>
<dbReference type="InterPro" id="IPR016484">
    <property type="entry name" value="GTPase_Der"/>
</dbReference>
<dbReference type="InterPro" id="IPR032859">
    <property type="entry name" value="KH_dom-like"/>
</dbReference>
<dbReference type="InterPro" id="IPR015946">
    <property type="entry name" value="KH_dom-like_a/b"/>
</dbReference>
<dbReference type="InterPro" id="IPR027417">
    <property type="entry name" value="P-loop_NTPase"/>
</dbReference>
<dbReference type="InterPro" id="IPR005225">
    <property type="entry name" value="Small_GTP-bd"/>
</dbReference>
<dbReference type="NCBIfam" id="TIGR03594">
    <property type="entry name" value="GTPase_EngA"/>
    <property type="match status" value="1"/>
</dbReference>
<dbReference type="NCBIfam" id="TIGR00231">
    <property type="entry name" value="small_GTP"/>
    <property type="match status" value="2"/>
</dbReference>
<dbReference type="PANTHER" id="PTHR43834">
    <property type="entry name" value="GTPASE DER"/>
    <property type="match status" value="1"/>
</dbReference>
<dbReference type="PANTHER" id="PTHR43834:SF6">
    <property type="entry name" value="GTPASE DER"/>
    <property type="match status" value="1"/>
</dbReference>
<dbReference type="Pfam" id="PF14714">
    <property type="entry name" value="KH_dom-like"/>
    <property type="match status" value="1"/>
</dbReference>
<dbReference type="Pfam" id="PF01926">
    <property type="entry name" value="MMR_HSR1"/>
    <property type="match status" value="2"/>
</dbReference>
<dbReference type="PIRSF" id="PIRSF006485">
    <property type="entry name" value="GTP-binding_EngA"/>
    <property type="match status" value="1"/>
</dbReference>
<dbReference type="PRINTS" id="PR00326">
    <property type="entry name" value="GTP1OBG"/>
</dbReference>
<dbReference type="SUPFAM" id="SSF52540">
    <property type="entry name" value="P-loop containing nucleoside triphosphate hydrolases"/>
    <property type="match status" value="2"/>
</dbReference>
<dbReference type="PROSITE" id="PS51712">
    <property type="entry name" value="G_ENGA"/>
    <property type="match status" value="2"/>
</dbReference>
<sequence>MQKVILVGKPNVGKSSLFNRLARRRIAITSDVSGTTRDTNKAKIEVEGKECILIDSGGLDDSSELFKNVKAKTLAEAKNSDVILYMVDGKMMPDDEDRAIFYELSKLNLPIALVINKIDSKKDEQREWEFVNFGSKNSFGISVSHNTGVDELSIWLAKHLEEKVQIKADTSDDFDDFLENYNDEGELSDEIDYESKNIRVGIIGRVNVGKSSLLNALVKESRAVVSDVAGTTIDPVNEIYEHDGRVFEFVDTAGIRKRGKIEGIERYALNRTEKILEETDVALLVLDSSEPLTELDERIAGIASKFELGVIIVLNKWDKSSEEFDELCKEIKDRFKFLSYAPIISVSALGGKRVHKIYPLIVEIYKNYTQKIQTSKLNEVIGEATKAHPLPRDKGRVVKIYYAVQFKTAPIMIALIMNRPKCLHFSYKRYLTNKLRESFSLTGVPIVLIPKKRGESDEDKEQ</sequence>
<name>DER_CAMC1</name>
<accession>A7ZBS1</accession>
<evidence type="ECO:0000255" key="1">
    <source>
        <dbReference type="HAMAP-Rule" id="MF_00195"/>
    </source>
</evidence>
<keyword id="KW-0342">GTP-binding</keyword>
<keyword id="KW-0547">Nucleotide-binding</keyword>
<keyword id="KW-0677">Repeat</keyword>
<keyword id="KW-0690">Ribosome biogenesis</keyword>
<feature type="chain" id="PRO_1000011590" description="GTPase Der">
    <location>
        <begin position="1"/>
        <end position="462"/>
    </location>
</feature>
<feature type="domain" description="EngA-type G 1">
    <location>
        <begin position="2"/>
        <end position="164"/>
    </location>
</feature>
<feature type="domain" description="EngA-type G 2">
    <location>
        <begin position="198"/>
        <end position="369"/>
    </location>
</feature>
<feature type="domain" description="KH-like" evidence="1">
    <location>
        <begin position="370"/>
        <end position="454"/>
    </location>
</feature>
<feature type="binding site" evidence="1">
    <location>
        <begin position="8"/>
        <end position="15"/>
    </location>
    <ligand>
        <name>GTP</name>
        <dbReference type="ChEBI" id="CHEBI:37565"/>
        <label>1</label>
    </ligand>
</feature>
<feature type="binding site" evidence="1">
    <location>
        <begin position="55"/>
        <end position="59"/>
    </location>
    <ligand>
        <name>GTP</name>
        <dbReference type="ChEBI" id="CHEBI:37565"/>
        <label>1</label>
    </ligand>
</feature>
<feature type="binding site" evidence="1">
    <location>
        <begin position="116"/>
        <end position="119"/>
    </location>
    <ligand>
        <name>GTP</name>
        <dbReference type="ChEBI" id="CHEBI:37565"/>
        <label>1</label>
    </ligand>
</feature>
<feature type="binding site" evidence="1">
    <location>
        <begin position="204"/>
        <end position="211"/>
    </location>
    <ligand>
        <name>GTP</name>
        <dbReference type="ChEBI" id="CHEBI:37565"/>
        <label>2</label>
    </ligand>
</feature>
<feature type="binding site" evidence="1">
    <location>
        <begin position="251"/>
        <end position="255"/>
    </location>
    <ligand>
        <name>GTP</name>
        <dbReference type="ChEBI" id="CHEBI:37565"/>
        <label>2</label>
    </ligand>
</feature>
<feature type="binding site" evidence="1">
    <location>
        <begin position="315"/>
        <end position="318"/>
    </location>
    <ligand>
        <name>GTP</name>
        <dbReference type="ChEBI" id="CHEBI:37565"/>
        <label>2</label>
    </ligand>
</feature>
<comment type="function">
    <text evidence="1">GTPase that plays an essential role in the late steps of ribosome biogenesis.</text>
</comment>
<comment type="subunit">
    <text evidence="1">Associates with the 50S ribosomal subunit.</text>
</comment>
<comment type="similarity">
    <text evidence="1">Belongs to the TRAFAC class TrmE-Era-EngA-EngB-Septin-like GTPase superfamily. EngA (Der) GTPase family.</text>
</comment>
<organism>
    <name type="scientific">Campylobacter concisus (strain 13826)</name>
    <dbReference type="NCBI Taxonomy" id="360104"/>
    <lineage>
        <taxon>Bacteria</taxon>
        <taxon>Pseudomonadati</taxon>
        <taxon>Campylobacterota</taxon>
        <taxon>Epsilonproteobacteria</taxon>
        <taxon>Campylobacterales</taxon>
        <taxon>Campylobacteraceae</taxon>
        <taxon>Campylobacter</taxon>
    </lineage>
</organism>
<proteinExistence type="inferred from homology"/>
<gene>
    <name evidence="1" type="primary">der</name>
    <name type="synonym">engA</name>
    <name type="ordered locus">Ccon26_03180</name>
    <name type="ORF">CCC13826_0777</name>
</gene>
<protein>
    <recommendedName>
        <fullName evidence="1">GTPase Der</fullName>
    </recommendedName>
    <alternativeName>
        <fullName evidence="1">GTP-binding protein EngA</fullName>
    </alternativeName>
</protein>
<reference key="1">
    <citation type="submission" date="2007-10" db="EMBL/GenBank/DDBJ databases">
        <title>Genome sequence of Campylobacter concisus 13826 isolated from human feces.</title>
        <authorList>
            <person name="Fouts D.E."/>
            <person name="Mongodin E.F."/>
            <person name="Puiu D."/>
            <person name="Sebastian Y."/>
            <person name="Miller W.G."/>
            <person name="Mandrell R.E."/>
            <person name="On S."/>
            <person name="Nelson K.E."/>
        </authorList>
    </citation>
    <scope>NUCLEOTIDE SEQUENCE [LARGE SCALE GENOMIC DNA]</scope>
    <source>
        <strain>13826</strain>
    </source>
</reference>